<comment type="function">
    <text evidence="1">Catalyzes the methyl esterification of L-isoaspartyl residues in peptides and proteins that result from spontaneous decomposition of normal L-aspartyl and L-asparaginyl residues. It plays a role in the repair and/or degradation of damaged proteins.</text>
</comment>
<comment type="catalytic activity">
    <reaction evidence="1">
        <text>[protein]-L-isoaspartate + S-adenosyl-L-methionine = [protein]-L-isoaspartate alpha-methyl ester + S-adenosyl-L-homocysteine</text>
        <dbReference type="Rhea" id="RHEA:12705"/>
        <dbReference type="Rhea" id="RHEA-COMP:12143"/>
        <dbReference type="Rhea" id="RHEA-COMP:12144"/>
        <dbReference type="ChEBI" id="CHEBI:57856"/>
        <dbReference type="ChEBI" id="CHEBI:59789"/>
        <dbReference type="ChEBI" id="CHEBI:90596"/>
        <dbReference type="ChEBI" id="CHEBI:90598"/>
        <dbReference type="EC" id="2.1.1.77"/>
    </reaction>
</comment>
<comment type="subcellular location">
    <subcellularLocation>
        <location evidence="1">Cytoplasm</location>
    </subcellularLocation>
</comment>
<comment type="similarity">
    <text evidence="1">Belongs to the methyltransferase superfamily. L-isoaspartyl/D-aspartyl protein methyltransferase family.</text>
</comment>
<protein>
    <recommendedName>
        <fullName evidence="1">Protein-L-isoaspartate O-methyltransferase</fullName>
        <ecNumber evidence="1">2.1.1.77</ecNumber>
    </recommendedName>
    <alternativeName>
        <fullName evidence="1">L-isoaspartyl protein carboxyl methyltransferase</fullName>
    </alternativeName>
    <alternativeName>
        <fullName evidence="1">Protein L-isoaspartyl methyltransferase</fullName>
    </alternativeName>
    <alternativeName>
        <fullName evidence="1">Protein-beta-aspartate methyltransferase</fullName>
        <shortName evidence="1">PIMT</shortName>
    </alternativeName>
</protein>
<reference key="1">
    <citation type="journal article" date="2004" name="Nat. Biotechnol.">
        <title>The genome sequence of the anaerobic, sulfate-reducing bacterium Desulfovibrio vulgaris Hildenborough.</title>
        <authorList>
            <person name="Heidelberg J.F."/>
            <person name="Seshadri R."/>
            <person name="Haveman S.A."/>
            <person name="Hemme C.L."/>
            <person name="Paulsen I.T."/>
            <person name="Kolonay J.F."/>
            <person name="Eisen J.A."/>
            <person name="Ward N.L."/>
            <person name="Methe B.A."/>
            <person name="Brinkac L.M."/>
            <person name="Daugherty S.C."/>
            <person name="DeBoy R.T."/>
            <person name="Dodson R.J."/>
            <person name="Durkin A.S."/>
            <person name="Madupu R."/>
            <person name="Nelson W.C."/>
            <person name="Sullivan S.A."/>
            <person name="Fouts D.E."/>
            <person name="Haft D.H."/>
            <person name="Selengut J."/>
            <person name="Peterson J.D."/>
            <person name="Davidsen T.M."/>
            <person name="Zafar N."/>
            <person name="Zhou L."/>
            <person name="Radune D."/>
            <person name="Dimitrov G."/>
            <person name="Hance M."/>
            <person name="Tran K."/>
            <person name="Khouri H.M."/>
            <person name="Gill J."/>
            <person name="Utterback T.R."/>
            <person name="Feldblyum T.V."/>
            <person name="Wall J.D."/>
            <person name="Voordouw G."/>
            <person name="Fraser C.M."/>
        </authorList>
    </citation>
    <scope>NUCLEOTIDE SEQUENCE [LARGE SCALE GENOMIC DNA]</scope>
    <source>
        <strain>ATCC 29579 / DSM 644 / CCUG 34227 / NCIMB 8303 / VKM B-1760 / Hildenborough</strain>
    </source>
</reference>
<proteinExistence type="inferred from homology"/>
<name>PIMT_NITV2</name>
<accession>Q72AZ1</accession>
<dbReference type="EC" id="2.1.1.77" evidence="1"/>
<dbReference type="EMBL" id="AE017285">
    <property type="protein sequence ID" value="AAS96325.1"/>
    <property type="molecule type" value="Genomic_DNA"/>
</dbReference>
<dbReference type="RefSeq" id="YP_011066.1">
    <property type="nucleotide sequence ID" value="NC_002937.3"/>
</dbReference>
<dbReference type="SMR" id="Q72AZ1"/>
<dbReference type="STRING" id="882.DVU_1849"/>
<dbReference type="PaxDb" id="882-DVU_1849"/>
<dbReference type="EnsemblBacteria" id="AAS96325">
    <property type="protein sequence ID" value="AAS96325"/>
    <property type="gene ID" value="DVU_1849"/>
</dbReference>
<dbReference type="KEGG" id="dvu:DVU_1849"/>
<dbReference type="PATRIC" id="fig|882.5.peg.1697"/>
<dbReference type="eggNOG" id="COG2518">
    <property type="taxonomic scope" value="Bacteria"/>
</dbReference>
<dbReference type="HOGENOM" id="CLU_055432_2_0_7"/>
<dbReference type="OrthoDB" id="9810066at2"/>
<dbReference type="PhylomeDB" id="Q72AZ1"/>
<dbReference type="Proteomes" id="UP000002194">
    <property type="component" value="Chromosome"/>
</dbReference>
<dbReference type="GO" id="GO:0005737">
    <property type="term" value="C:cytoplasm"/>
    <property type="evidence" value="ECO:0007669"/>
    <property type="project" value="UniProtKB-SubCell"/>
</dbReference>
<dbReference type="GO" id="GO:0004719">
    <property type="term" value="F:protein-L-isoaspartate (D-aspartate) O-methyltransferase activity"/>
    <property type="evidence" value="ECO:0007669"/>
    <property type="project" value="UniProtKB-UniRule"/>
</dbReference>
<dbReference type="GO" id="GO:0032259">
    <property type="term" value="P:methylation"/>
    <property type="evidence" value="ECO:0007669"/>
    <property type="project" value="UniProtKB-KW"/>
</dbReference>
<dbReference type="GO" id="GO:0036211">
    <property type="term" value="P:protein modification process"/>
    <property type="evidence" value="ECO:0007669"/>
    <property type="project" value="UniProtKB-UniRule"/>
</dbReference>
<dbReference type="GO" id="GO:0030091">
    <property type="term" value="P:protein repair"/>
    <property type="evidence" value="ECO:0007669"/>
    <property type="project" value="UniProtKB-UniRule"/>
</dbReference>
<dbReference type="CDD" id="cd02440">
    <property type="entry name" value="AdoMet_MTases"/>
    <property type="match status" value="1"/>
</dbReference>
<dbReference type="FunFam" id="3.40.50.150:FF:000010">
    <property type="entry name" value="Protein-L-isoaspartate O-methyltransferase"/>
    <property type="match status" value="1"/>
</dbReference>
<dbReference type="Gene3D" id="3.40.50.150">
    <property type="entry name" value="Vaccinia Virus protein VP39"/>
    <property type="match status" value="1"/>
</dbReference>
<dbReference type="HAMAP" id="MF_00090">
    <property type="entry name" value="PIMT"/>
    <property type="match status" value="1"/>
</dbReference>
<dbReference type="InterPro" id="IPR000682">
    <property type="entry name" value="PCMT"/>
</dbReference>
<dbReference type="InterPro" id="IPR029063">
    <property type="entry name" value="SAM-dependent_MTases_sf"/>
</dbReference>
<dbReference type="NCBIfam" id="TIGR00080">
    <property type="entry name" value="pimt"/>
    <property type="match status" value="1"/>
</dbReference>
<dbReference type="NCBIfam" id="NF001453">
    <property type="entry name" value="PRK00312.1"/>
    <property type="match status" value="1"/>
</dbReference>
<dbReference type="PANTHER" id="PTHR11579">
    <property type="entry name" value="PROTEIN-L-ISOASPARTATE O-METHYLTRANSFERASE"/>
    <property type="match status" value="1"/>
</dbReference>
<dbReference type="PANTHER" id="PTHR11579:SF0">
    <property type="entry name" value="PROTEIN-L-ISOASPARTATE(D-ASPARTATE) O-METHYLTRANSFERASE"/>
    <property type="match status" value="1"/>
</dbReference>
<dbReference type="Pfam" id="PF01135">
    <property type="entry name" value="PCMT"/>
    <property type="match status" value="1"/>
</dbReference>
<dbReference type="SUPFAM" id="SSF53335">
    <property type="entry name" value="S-adenosyl-L-methionine-dependent methyltransferases"/>
    <property type="match status" value="1"/>
</dbReference>
<dbReference type="PROSITE" id="PS01279">
    <property type="entry name" value="PCMT"/>
    <property type="match status" value="1"/>
</dbReference>
<gene>
    <name evidence="1" type="primary">pcm</name>
    <name type="ordered locus">DVU_1849</name>
</gene>
<sequence>MRRNRERMVRQQLMPRGISDEAVLAAMGCVPRHLFVQEALRAQAYEDHPLPIGNGQTISQPFIVAFMSQLLEAKPGMRVLEIGTGSGYQAAVLAEMGLDVYTVERIREIYQTTRDLLRALRYTRIRCRLDDGTLGWPESAPFDRIIVTAGGPEIPVPLVEQLADPGVMVLPVGVSRRSQELVVVRKRDGKLFRSNRGGVSFVDLVGCHGW</sequence>
<feature type="chain" id="PRO_0000111885" description="Protein-L-isoaspartate O-methyltransferase">
    <location>
        <begin position="1"/>
        <end position="210"/>
    </location>
</feature>
<feature type="active site" evidence="1">
    <location>
        <position position="59"/>
    </location>
</feature>
<evidence type="ECO:0000255" key="1">
    <source>
        <dbReference type="HAMAP-Rule" id="MF_00090"/>
    </source>
</evidence>
<organism>
    <name type="scientific">Nitratidesulfovibrio vulgaris (strain ATCC 29579 / DSM 644 / CCUG 34227 / NCIMB 8303 / VKM B-1760 / Hildenborough)</name>
    <name type="common">Desulfovibrio vulgaris</name>
    <dbReference type="NCBI Taxonomy" id="882"/>
    <lineage>
        <taxon>Bacteria</taxon>
        <taxon>Pseudomonadati</taxon>
        <taxon>Thermodesulfobacteriota</taxon>
        <taxon>Desulfovibrionia</taxon>
        <taxon>Desulfovibrionales</taxon>
        <taxon>Desulfovibrionaceae</taxon>
        <taxon>Nitratidesulfovibrio</taxon>
    </lineage>
</organism>
<keyword id="KW-0963">Cytoplasm</keyword>
<keyword id="KW-0489">Methyltransferase</keyword>
<keyword id="KW-1185">Reference proteome</keyword>
<keyword id="KW-0949">S-adenosyl-L-methionine</keyword>
<keyword id="KW-0808">Transferase</keyword>